<feature type="chain" id="PRO_0000109112" description="UDP-N-acetylmuramoylalanine--D-glutamate ligase">
    <location>
        <begin position="1"/>
        <end position="450"/>
    </location>
</feature>
<feature type="binding site" evidence="1">
    <location>
        <begin position="115"/>
        <end position="121"/>
    </location>
    <ligand>
        <name>ATP</name>
        <dbReference type="ChEBI" id="CHEBI:30616"/>
    </ligand>
</feature>
<protein>
    <recommendedName>
        <fullName evidence="1">UDP-N-acetylmuramoylalanine--D-glutamate ligase</fullName>
        <ecNumber evidence="1">6.3.2.9</ecNumber>
    </recommendedName>
    <alternativeName>
        <fullName evidence="1">D-glutamic acid-adding enzyme</fullName>
    </alternativeName>
    <alternativeName>
        <fullName evidence="1">UDP-N-acetylmuramoyl-L-alanyl-D-glutamate synthetase</fullName>
    </alternativeName>
</protein>
<reference key="1">
    <citation type="journal article" date="2002" name="Genome Res.">
        <title>A complete sequence of the T. tengcongensis genome.</title>
        <authorList>
            <person name="Bao Q."/>
            <person name="Tian Y."/>
            <person name="Li W."/>
            <person name="Xu Z."/>
            <person name="Xuan Z."/>
            <person name="Hu S."/>
            <person name="Dong W."/>
            <person name="Yang J."/>
            <person name="Chen Y."/>
            <person name="Xue Y."/>
            <person name="Xu Y."/>
            <person name="Lai X."/>
            <person name="Huang L."/>
            <person name="Dong X."/>
            <person name="Ma Y."/>
            <person name="Ling L."/>
            <person name="Tan H."/>
            <person name="Chen R."/>
            <person name="Wang J."/>
            <person name="Yu J."/>
            <person name="Yang H."/>
        </authorList>
    </citation>
    <scope>NUCLEOTIDE SEQUENCE [LARGE SCALE GENOMIC DNA]</scope>
    <source>
        <strain>DSM 15242 / JCM 11007 / NBRC 100824 / MB4</strain>
    </source>
</reference>
<evidence type="ECO:0000255" key="1">
    <source>
        <dbReference type="HAMAP-Rule" id="MF_00639"/>
    </source>
</evidence>
<name>MURD_CALS4</name>
<keyword id="KW-0067">ATP-binding</keyword>
<keyword id="KW-0131">Cell cycle</keyword>
<keyword id="KW-0132">Cell division</keyword>
<keyword id="KW-0133">Cell shape</keyword>
<keyword id="KW-0961">Cell wall biogenesis/degradation</keyword>
<keyword id="KW-0963">Cytoplasm</keyword>
<keyword id="KW-0436">Ligase</keyword>
<keyword id="KW-0547">Nucleotide-binding</keyword>
<keyword id="KW-0573">Peptidoglycan synthesis</keyword>
<keyword id="KW-1185">Reference proteome</keyword>
<dbReference type="EC" id="6.3.2.9" evidence="1"/>
<dbReference type="EMBL" id="AE008691">
    <property type="protein sequence ID" value="AAM24849.1"/>
    <property type="molecule type" value="Genomic_DNA"/>
</dbReference>
<dbReference type="RefSeq" id="WP_009611118.1">
    <property type="nucleotide sequence ID" value="NC_003869.1"/>
</dbReference>
<dbReference type="SMR" id="Q8R9G4"/>
<dbReference type="STRING" id="273068.TTE1647"/>
<dbReference type="KEGG" id="tte:TTE1647"/>
<dbReference type="eggNOG" id="COG0771">
    <property type="taxonomic scope" value="Bacteria"/>
</dbReference>
<dbReference type="HOGENOM" id="CLU_032540_0_1_9"/>
<dbReference type="OrthoDB" id="9809796at2"/>
<dbReference type="UniPathway" id="UPA00219"/>
<dbReference type="Proteomes" id="UP000000555">
    <property type="component" value="Chromosome"/>
</dbReference>
<dbReference type="GO" id="GO:0005737">
    <property type="term" value="C:cytoplasm"/>
    <property type="evidence" value="ECO:0007669"/>
    <property type="project" value="UniProtKB-SubCell"/>
</dbReference>
<dbReference type="GO" id="GO:0005524">
    <property type="term" value="F:ATP binding"/>
    <property type="evidence" value="ECO:0007669"/>
    <property type="project" value="UniProtKB-UniRule"/>
</dbReference>
<dbReference type="GO" id="GO:0008764">
    <property type="term" value="F:UDP-N-acetylmuramoylalanine-D-glutamate ligase activity"/>
    <property type="evidence" value="ECO:0007669"/>
    <property type="project" value="UniProtKB-UniRule"/>
</dbReference>
<dbReference type="GO" id="GO:0051301">
    <property type="term" value="P:cell division"/>
    <property type="evidence" value="ECO:0007669"/>
    <property type="project" value="UniProtKB-KW"/>
</dbReference>
<dbReference type="GO" id="GO:0071555">
    <property type="term" value="P:cell wall organization"/>
    <property type="evidence" value="ECO:0007669"/>
    <property type="project" value="UniProtKB-KW"/>
</dbReference>
<dbReference type="GO" id="GO:0009252">
    <property type="term" value="P:peptidoglycan biosynthetic process"/>
    <property type="evidence" value="ECO:0007669"/>
    <property type="project" value="UniProtKB-UniRule"/>
</dbReference>
<dbReference type="GO" id="GO:0008360">
    <property type="term" value="P:regulation of cell shape"/>
    <property type="evidence" value="ECO:0007669"/>
    <property type="project" value="UniProtKB-KW"/>
</dbReference>
<dbReference type="Gene3D" id="3.90.190.20">
    <property type="entry name" value="Mur ligase, C-terminal domain"/>
    <property type="match status" value="1"/>
</dbReference>
<dbReference type="Gene3D" id="3.40.1190.10">
    <property type="entry name" value="Mur-like, catalytic domain"/>
    <property type="match status" value="1"/>
</dbReference>
<dbReference type="Gene3D" id="3.40.50.720">
    <property type="entry name" value="NAD(P)-binding Rossmann-like Domain"/>
    <property type="match status" value="1"/>
</dbReference>
<dbReference type="HAMAP" id="MF_00639">
    <property type="entry name" value="MurD"/>
    <property type="match status" value="1"/>
</dbReference>
<dbReference type="InterPro" id="IPR036565">
    <property type="entry name" value="Mur-like_cat_sf"/>
</dbReference>
<dbReference type="InterPro" id="IPR004101">
    <property type="entry name" value="Mur_ligase_C"/>
</dbReference>
<dbReference type="InterPro" id="IPR036615">
    <property type="entry name" value="Mur_ligase_C_dom_sf"/>
</dbReference>
<dbReference type="InterPro" id="IPR013221">
    <property type="entry name" value="Mur_ligase_cen"/>
</dbReference>
<dbReference type="InterPro" id="IPR005762">
    <property type="entry name" value="MurD"/>
</dbReference>
<dbReference type="NCBIfam" id="TIGR01087">
    <property type="entry name" value="murD"/>
    <property type="match status" value="1"/>
</dbReference>
<dbReference type="PANTHER" id="PTHR43692">
    <property type="entry name" value="UDP-N-ACETYLMURAMOYLALANINE--D-GLUTAMATE LIGASE"/>
    <property type="match status" value="1"/>
</dbReference>
<dbReference type="PANTHER" id="PTHR43692:SF1">
    <property type="entry name" value="UDP-N-ACETYLMURAMOYLALANINE--D-GLUTAMATE LIGASE"/>
    <property type="match status" value="1"/>
</dbReference>
<dbReference type="Pfam" id="PF02875">
    <property type="entry name" value="Mur_ligase_C"/>
    <property type="match status" value="1"/>
</dbReference>
<dbReference type="Pfam" id="PF08245">
    <property type="entry name" value="Mur_ligase_M"/>
    <property type="match status" value="1"/>
</dbReference>
<dbReference type="Pfam" id="PF21799">
    <property type="entry name" value="MurD-like_N"/>
    <property type="match status" value="1"/>
</dbReference>
<dbReference type="SUPFAM" id="SSF51984">
    <property type="entry name" value="MurCD N-terminal domain"/>
    <property type="match status" value="1"/>
</dbReference>
<dbReference type="SUPFAM" id="SSF53623">
    <property type="entry name" value="MurD-like peptide ligases, catalytic domain"/>
    <property type="match status" value="1"/>
</dbReference>
<dbReference type="SUPFAM" id="SSF53244">
    <property type="entry name" value="MurD-like peptide ligases, peptide-binding domain"/>
    <property type="match status" value="1"/>
</dbReference>
<gene>
    <name evidence="1" type="primary">murD</name>
    <name type="ordered locus">TTE1647</name>
</gene>
<comment type="function">
    <text evidence="1">Cell wall formation. Catalyzes the addition of glutamate to the nucleotide precursor UDP-N-acetylmuramoyl-L-alanine (UMA).</text>
</comment>
<comment type="catalytic activity">
    <reaction evidence="1">
        <text>UDP-N-acetyl-alpha-D-muramoyl-L-alanine + D-glutamate + ATP = UDP-N-acetyl-alpha-D-muramoyl-L-alanyl-D-glutamate + ADP + phosphate + H(+)</text>
        <dbReference type="Rhea" id="RHEA:16429"/>
        <dbReference type="ChEBI" id="CHEBI:15378"/>
        <dbReference type="ChEBI" id="CHEBI:29986"/>
        <dbReference type="ChEBI" id="CHEBI:30616"/>
        <dbReference type="ChEBI" id="CHEBI:43474"/>
        <dbReference type="ChEBI" id="CHEBI:83898"/>
        <dbReference type="ChEBI" id="CHEBI:83900"/>
        <dbReference type="ChEBI" id="CHEBI:456216"/>
        <dbReference type="EC" id="6.3.2.9"/>
    </reaction>
</comment>
<comment type="pathway">
    <text evidence="1">Cell wall biogenesis; peptidoglycan biosynthesis.</text>
</comment>
<comment type="subcellular location">
    <subcellularLocation>
        <location evidence="1">Cytoplasm</location>
    </subcellularLocation>
</comment>
<comment type="similarity">
    <text evidence="1">Belongs to the MurCDEF family.</text>
</comment>
<accession>Q8R9G4</accession>
<sequence length="450" mass="50441">MELKEKRVFVAGLGVSGVALCRVLVNLGANVIAYDRKNEIALKEALEELKDLPVEIKLGEFKEEFLKGIELVVLSPGISLESEIVKKAKDMGLEILGEVELAYRLSKAPIYAITGTNGKTTTTSLLGEMFRNAGRKVYVAGNIGYPLIYAALEAGPNDHIVAEISSFQLETVKEFRPKISCIINITPDHLDRHKTFENYANIKGRIFENQREEEYVVLNYDDPVTWGLKERAKAKVFPFSRKKVLENGAYVKEGFLYLQNKKVIKVEDIYIPGEHNLENALAASSVAYLSGIEVDAIETTLRTFKGVEHRIEFVAEIEGIKFYNDSKGTNPDASIKAIQALKTPIVLIAGGYDKGSEFDEFVKTFDKKVRKLILIGQTAQKIKKTALKYSYPEEDIFLVDSLEEAVRKAYEVAEKGDSVLLSPACASWDMFKNFEERGKAFKKAVMDLRR</sequence>
<organism>
    <name type="scientific">Caldanaerobacter subterraneus subsp. tengcongensis (strain DSM 15242 / JCM 11007 / NBRC 100824 / MB4)</name>
    <name type="common">Thermoanaerobacter tengcongensis</name>
    <dbReference type="NCBI Taxonomy" id="273068"/>
    <lineage>
        <taxon>Bacteria</taxon>
        <taxon>Bacillati</taxon>
        <taxon>Bacillota</taxon>
        <taxon>Clostridia</taxon>
        <taxon>Thermoanaerobacterales</taxon>
        <taxon>Thermoanaerobacteraceae</taxon>
        <taxon>Caldanaerobacter</taxon>
    </lineage>
</organism>
<proteinExistence type="inferred from homology"/>